<gene>
    <name evidence="1" type="primary">fbp</name>
    <name type="ordered locus">LCA_1778</name>
</gene>
<reference key="1">
    <citation type="journal article" date="2005" name="Nat. Biotechnol.">
        <title>The complete genome sequence of the meat-borne lactic acid bacterium Lactobacillus sakei 23K.</title>
        <authorList>
            <person name="Chaillou S."/>
            <person name="Champomier-Verges M.-C."/>
            <person name="Cornet M."/>
            <person name="Crutz-Le Coq A.-M."/>
            <person name="Dudez A.-M."/>
            <person name="Martin V."/>
            <person name="Beaufils S."/>
            <person name="Darbon-Rongere E."/>
            <person name="Bossy R."/>
            <person name="Loux V."/>
            <person name="Zagorec M."/>
        </authorList>
    </citation>
    <scope>NUCLEOTIDE SEQUENCE [LARGE SCALE GENOMIC DNA]</scope>
    <source>
        <strain>23K</strain>
    </source>
</reference>
<accession>Q38UP9</accession>
<organism>
    <name type="scientific">Latilactobacillus sakei subsp. sakei (strain 23K)</name>
    <name type="common">Lactobacillus sakei subsp. sakei</name>
    <dbReference type="NCBI Taxonomy" id="314315"/>
    <lineage>
        <taxon>Bacteria</taxon>
        <taxon>Bacillati</taxon>
        <taxon>Bacillota</taxon>
        <taxon>Bacilli</taxon>
        <taxon>Lactobacillales</taxon>
        <taxon>Lactobacillaceae</taxon>
        <taxon>Latilactobacillus</taxon>
    </lineage>
</organism>
<feature type="chain" id="PRO_0000363096" description="Fructose-1,6-bisphosphatase class 3">
    <location>
        <begin position="1"/>
        <end position="641"/>
    </location>
</feature>
<name>F16PC_LATSS</name>
<sequence length="641" mass="73282">MINNKMKTLSDKYPTKMAVTSEIINLKAILNLPKPTEAFMSDLHGEYDAFQHLIRTGAGNLRQKINELFSGEMTPETMQAFAFLVYYPTERLALKHKALSENELNQWYLTTFKRMIDLLKFVSTKYTRSKVRKAMAPDFVYITEELMYGDVANVDKKRYFQEITATIIELGQADALIIATSHTIQRLVVDQWHIIGDIYDRGPHPDLIVDQLTQLPAVDVQWGNHDILWFGAASGSELCLLNLLRICARYNNLAIIEETYGIALTDLVRFAAQHYQANSAFMPVEDPNQGPLTHAEKLKISQVQQALAIMQFKLELTVIKRHPEFNMDHRLLLSQVDFKRRILHLNGQEYPLKNTCFQLVDPENPEALTAEESQIIADLLAAFTRCQKLRKHLTFLIDHGSMYRIYNQNLLFHGCLPVDAQGHFLTLTLANQNYAGKQLLDFFDQQIRSSFNHPLHQANLSTDLLWYLWTGPLSPLFGKNAMTTFERYFCPDPETHVETKNAYYSLRHDADFIQQLLSEFNLSPETGHILNGHTPVKKGHDPIMANRQMIVIDGGFSKAYHHTTGIGGFTLLYNSYGMQLVTHQPFTTKADAIANMKDIISTRRVIDQVSQRQRVSQTNIGAAIKTEIEQLQTLLTIQPDH</sequence>
<evidence type="ECO:0000255" key="1">
    <source>
        <dbReference type="HAMAP-Rule" id="MF_01854"/>
    </source>
</evidence>
<comment type="catalytic activity">
    <reaction evidence="1">
        <text>beta-D-fructose 1,6-bisphosphate + H2O = beta-D-fructose 6-phosphate + phosphate</text>
        <dbReference type="Rhea" id="RHEA:11064"/>
        <dbReference type="ChEBI" id="CHEBI:15377"/>
        <dbReference type="ChEBI" id="CHEBI:32966"/>
        <dbReference type="ChEBI" id="CHEBI:43474"/>
        <dbReference type="ChEBI" id="CHEBI:57634"/>
        <dbReference type="EC" id="3.1.3.11"/>
    </reaction>
</comment>
<comment type="cofactor">
    <cofactor evidence="1">
        <name>Mn(2+)</name>
        <dbReference type="ChEBI" id="CHEBI:29035"/>
    </cofactor>
</comment>
<comment type="pathway">
    <text evidence="1">Carbohydrate biosynthesis; gluconeogenesis.</text>
</comment>
<comment type="similarity">
    <text evidence="1">Belongs to the FBPase class 3 family.</text>
</comment>
<keyword id="KW-0119">Carbohydrate metabolism</keyword>
<keyword id="KW-0378">Hydrolase</keyword>
<keyword id="KW-0464">Manganese</keyword>
<keyword id="KW-1185">Reference proteome</keyword>
<proteinExistence type="inferred from homology"/>
<dbReference type="EC" id="3.1.3.11" evidence="1"/>
<dbReference type="EMBL" id="CR936503">
    <property type="protein sequence ID" value="CAI56086.1"/>
    <property type="molecule type" value="Genomic_DNA"/>
</dbReference>
<dbReference type="RefSeq" id="WP_011375460.1">
    <property type="nucleotide sequence ID" value="NC_007576.1"/>
</dbReference>
<dbReference type="STRING" id="314315.LCA_1778"/>
<dbReference type="KEGG" id="lsa:LCA_1778"/>
<dbReference type="eggNOG" id="COG3855">
    <property type="taxonomic scope" value="Bacteria"/>
</dbReference>
<dbReference type="HOGENOM" id="CLU_028392_2_0_9"/>
<dbReference type="OrthoDB" id="9779903at2"/>
<dbReference type="UniPathway" id="UPA00138"/>
<dbReference type="Proteomes" id="UP000002707">
    <property type="component" value="Chromosome"/>
</dbReference>
<dbReference type="GO" id="GO:0042132">
    <property type="term" value="F:fructose 1,6-bisphosphate 1-phosphatase activity"/>
    <property type="evidence" value="ECO:0007669"/>
    <property type="project" value="UniProtKB-UniRule"/>
</dbReference>
<dbReference type="GO" id="GO:0006094">
    <property type="term" value="P:gluconeogenesis"/>
    <property type="evidence" value="ECO:0007669"/>
    <property type="project" value="UniProtKB-UniRule"/>
</dbReference>
<dbReference type="HAMAP" id="MF_01854">
    <property type="entry name" value="FBPase_class3"/>
    <property type="match status" value="1"/>
</dbReference>
<dbReference type="InterPro" id="IPR009164">
    <property type="entry name" value="FBPtase_class3"/>
</dbReference>
<dbReference type="InterPro" id="IPR029052">
    <property type="entry name" value="Metallo-depent_PP-like"/>
</dbReference>
<dbReference type="Pfam" id="PF06874">
    <property type="entry name" value="FBPase_2"/>
    <property type="match status" value="1"/>
</dbReference>
<dbReference type="PIRSF" id="PIRSF000906">
    <property type="entry name" value="FBPtase_Bacill"/>
    <property type="match status" value="1"/>
</dbReference>
<dbReference type="SUPFAM" id="SSF56300">
    <property type="entry name" value="Metallo-dependent phosphatases"/>
    <property type="match status" value="1"/>
</dbReference>
<protein>
    <recommendedName>
        <fullName evidence="1">Fructose-1,6-bisphosphatase class 3</fullName>
        <shortName evidence="1">FBPase class 3</shortName>
        <ecNumber evidence="1">3.1.3.11</ecNumber>
    </recommendedName>
    <alternativeName>
        <fullName evidence="1">D-fructose-1,6-bisphosphate 1-phosphohydrolase class 3</fullName>
    </alternativeName>
</protein>